<keyword id="KW-0066">ATP synthesis</keyword>
<keyword id="KW-1003">Cell membrane</keyword>
<keyword id="KW-0139">CF(1)</keyword>
<keyword id="KW-0375">Hydrogen ion transport</keyword>
<keyword id="KW-0406">Ion transport</keyword>
<keyword id="KW-0472">Membrane</keyword>
<keyword id="KW-0813">Transport</keyword>
<sequence length="134" mass="14535">MASLNLEIITPERVVLQAEAASVIAPGIQGYLGVLPEHAPLITPLQAGVVTCRRRERAEERVAVSGGFLEAGPDQVIILADTAERSEEIDVEWARQARERAERRLRERPPGLDVARAEAALRRAVARLKAAGAI</sequence>
<name>ATPE_MOOTA</name>
<reference key="1">
    <citation type="journal article" date="1997" name="J. Bacteriol.">
        <title>Composition and primary structure of the F1F0 ATP synthase from the obligately anaerobic bacterium Clostridium thermoaceticum.</title>
        <authorList>
            <person name="Das A."/>
            <person name="Ljungdahl L.G."/>
        </authorList>
    </citation>
    <scope>NUCLEOTIDE SEQUENCE [GENOMIC DNA]</scope>
    <scope>SUBUNIT</scope>
    <scope>OPERON STRUCTURE</scope>
</reference>
<reference key="2">
    <citation type="journal article" date="2008" name="Environ. Microbiol.">
        <title>The complete genome sequence of Moorella thermoacetica (f. Clostridium thermoaceticum).</title>
        <authorList>
            <person name="Pierce E."/>
            <person name="Xie G."/>
            <person name="Barabote R.D."/>
            <person name="Saunders E."/>
            <person name="Han C.S."/>
            <person name="Detter J.C."/>
            <person name="Richardson P."/>
            <person name="Brettin T.S."/>
            <person name="Das A."/>
            <person name="Ljungdahl L.G."/>
            <person name="Ragsdale S.W."/>
        </authorList>
    </citation>
    <scope>NUCLEOTIDE SEQUENCE [LARGE SCALE GENOMIC DNA]</scope>
    <source>
        <strain>ATCC 39073 / JCM 9320</strain>
    </source>
</reference>
<evidence type="ECO:0000255" key="1">
    <source>
        <dbReference type="HAMAP-Rule" id="MF_00530"/>
    </source>
</evidence>
<evidence type="ECO:0000269" key="2">
    <source>
    </source>
</evidence>
<organism>
    <name type="scientific">Moorella thermoacetica (strain ATCC 39073 / JCM 9320)</name>
    <dbReference type="NCBI Taxonomy" id="264732"/>
    <lineage>
        <taxon>Bacteria</taxon>
        <taxon>Bacillati</taxon>
        <taxon>Bacillota</taxon>
        <taxon>Clostridia</taxon>
        <taxon>Moorellales</taxon>
        <taxon>Moorellaceae</taxon>
        <taxon>Moorella</taxon>
    </lineage>
</organism>
<dbReference type="EMBL" id="U64318">
    <property type="protein sequence ID" value="AAB51467.1"/>
    <property type="molecule type" value="Genomic_DNA"/>
</dbReference>
<dbReference type="EMBL" id="CP000232">
    <property type="protein sequence ID" value="ABC20659.1"/>
    <property type="molecule type" value="Genomic_DNA"/>
</dbReference>
<dbReference type="RefSeq" id="YP_431202.1">
    <property type="nucleotide sequence ID" value="NC_007644.1"/>
</dbReference>
<dbReference type="SMR" id="O05434"/>
<dbReference type="STRING" id="264732.Moth_2377"/>
<dbReference type="EnsemblBacteria" id="ABC20659">
    <property type="protein sequence ID" value="ABC20659"/>
    <property type="gene ID" value="Moth_2377"/>
</dbReference>
<dbReference type="KEGG" id="mta:Moth_2377"/>
<dbReference type="PATRIC" id="fig|264732.11.peg.2590"/>
<dbReference type="eggNOG" id="COG0355">
    <property type="taxonomic scope" value="Bacteria"/>
</dbReference>
<dbReference type="HOGENOM" id="CLU_084338_2_0_9"/>
<dbReference type="OrthoDB" id="9804110at2"/>
<dbReference type="GO" id="GO:0005886">
    <property type="term" value="C:plasma membrane"/>
    <property type="evidence" value="ECO:0007669"/>
    <property type="project" value="UniProtKB-SubCell"/>
</dbReference>
<dbReference type="GO" id="GO:0045259">
    <property type="term" value="C:proton-transporting ATP synthase complex"/>
    <property type="evidence" value="ECO:0007669"/>
    <property type="project" value="UniProtKB-KW"/>
</dbReference>
<dbReference type="GO" id="GO:0005524">
    <property type="term" value="F:ATP binding"/>
    <property type="evidence" value="ECO:0007669"/>
    <property type="project" value="UniProtKB-UniRule"/>
</dbReference>
<dbReference type="GO" id="GO:0046933">
    <property type="term" value="F:proton-transporting ATP synthase activity, rotational mechanism"/>
    <property type="evidence" value="ECO:0007669"/>
    <property type="project" value="UniProtKB-UniRule"/>
</dbReference>
<dbReference type="CDD" id="cd12152">
    <property type="entry name" value="F1-ATPase_delta"/>
    <property type="match status" value="1"/>
</dbReference>
<dbReference type="Gene3D" id="1.20.5.440">
    <property type="entry name" value="ATP synthase delta/epsilon subunit, C-terminal domain"/>
    <property type="match status" value="1"/>
</dbReference>
<dbReference type="Gene3D" id="2.60.15.10">
    <property type="entry name" value="F0F1 ATP synthase delta/epsilon subunit, N-terminal"/>
    <property type="match status" value="1"/>
</dbReference>
<dbReference type="HAMAP" id="MF_00530">
    <property type="entry name" value="ATP_synth_epsil_bac"/>
    <property type="match status" value="1"/>
</dbReference>
<dbReference type="InterPro" id="IPR036794">
    <property type="entry name" value="ATP_F1_dsu/esu_C_sf"/>
</dbReference>
<dbReference type="InterPro" id="IPR001469">
    <property type="entry name" value="ATP_synth_F1_dsu/esu"/>
</dbReference>
<dbReference type="InterPro" id="IPR020546">
    <property type="entry name" value="ATP_synth_F1_dsu/esu_N"/>
</dbReference>
<dbReference type="InterPro" id="IPR020547">
    <property type="entry name" value="ATP_synth_F1_esu_C"/>
</dbReference>
<dbReference type="InterPro" id="IPR036771">
    <property type="entry name" value="ATPsynth_dsu/esu_N"/>
</dbReference>
<dbReference type="NCBIfam" id="TIGR01216">
    <property type="entry name" value="ATP_synt_epsi"/>
    <property type="match status" value="1"/>
</dbReference>
<dbReference type="NCBIfam" id="NF009980">
    <property type="entry name" value="PRK13446.1"/>
    <property type="match status" value="1"/>
</dbReference>
<dbReference type="PANTHER" id="PTHR13822">
    <property type="entry name" value="ATP SYNTHASE DELTA/EPSILON CHAIN"/>
    <property type="match status" value="1"/>
</dbReference>
<dbReference type="PANTHER" id="PTHR13822:SF10">
    <property type="entry name" value="ATP SYNTHASE EPSILON CHAIN, CHLOROPLASTIC"/>
    <property type="match status" value="1"/>
</dbReference>
<dbReference type="Pfam" id="PF00401">
    <property type="entry name" value="ATP-synt_DE"/>
    <property type="match status" value="1"/>
</dbReference>
<dbReference type="Pfam" id="PF02823">
    <property type="entry name" value="ATP-synt_DE_N"/>
    <property type="match status" value="1"/>
</dbReference>
<dbReference type="SUPFAM" id="SSF46604">
    <property type="entry name" value="Epsilon subunit of F1F0-ATP synthase C-terminal domain"/>
    <property type="match status" value="1"/>
</dbReference>
<dbReference type="SUPFAM" id="SSF51344">
    <property type="entry name" value="Epsilon subunit of F1F0-ATP synthase N-terminal domain"/>
    <property type="match status" value="1"/>
</dbReference>
<comment type="function">
    <text>Produces ATP from ADP in the presence of a proton gradient across the membrane.</text>
</comment>
<comment type="subunit">
    <text evidence="1 2">F-type ATPases have 2 components, CF(1) - the catalytic core - and CF(0) - the membrane proton channel. CF(1) has five subunits: alpha(3), beta(3), gamma(1), delta(1), epsilon(1). CF(0) has three main subunits: a, b and c (By similarity). In this bacterium the a and b subunits are transcribed but do not seem to be translated, thus the ATP synthase consists of the alpha, beta, gamma, delta, epsilon and c subunits.</text>
</comment>
<comment type="subcellular location">
    <subcellularLocation>
        <location>Cell membrane</location>
        <topology>Peripheral membrane protein</topology>
    </subcellularLocation>
</comment>
<comment type="similarity">
    <text evidence="1">Belongs to the ATPase epsilon chain family.</text>
</comment>
<gene>
    <name evidence="1" type="primary">atpC</name>
    <name type="ordered locus">Moth_2377</name>
</gene>
<accession>O05434</accession>
<accession>Q2RFY0</accession>
<proteinExistence type="evidence at protein level"/>
<protein>
    <recommendedName>
        <fullName evidence="1">ATP synthase epsilon chain</fullName>
    </recommendedName>
    <alternativeName>
        <fullName evidence="1">ATP synthase F1 sector epsilon subunit</fullName>
    </alternativeName>
    <alternativeName>
        <fullName evidence="1">F-ATPase epsilon subunit</fullName>
    </alternativeName>
</protein>
<feature type="chain" id="PRO_0000188157" description="ATP synthase epsilon chain">
    <location>
        <begin position="1"/>
        <end position="134"/>
    </location>
</feature>